<reference key="1">
    <citation type="journal article" date="2003" name="Proc. Natl. Acad. Sci. U.S.A.">
        <title>Complete genome sequence of Lactobacillus plantarum WCFS1.</title>
        <authorList>
            <person name="Kleerebezem M."/>
            <person name="Boekhorst J."/>
            <person name="van Kranenburg R."/>
            <person name="Molenaar D."/>
            <person name="Kuipers O.P."/>
            <person name="Leer R."/>
            <person name="Tarchini R."/>
            <person name="Peters S.A."/>
            <person name="Sandbrink H.M."/>
            <person name="Fiers M.W.E.J."/>
            <person name="Stiekema W."/>
            <person name="Klein Lankhorst R.M."/>
            <person name="Bron P.A."/>
            <person name="Hoffer S.M."/>
            <person name="Nierop Groot M.N."/>
            <person name="Kerkhoven R."/>
            <person name="De Vries M."/>
            <person name="Ursing B."/>
            <person name="De Vos W.M."/>
            <person name="Siezen R.J."/>
        </authorList>
    </citation>
    <scope>NUCLEOTIDE SEQUENCE [LARGE SCALE GENOMIC DNA]</scope>
    <source>
        <strain>ATCC BAA-793 / NCIMB 8826 / WCFS1</strain>
    </source>
</reference>
<reference key="2">
    <citation type="journal article" date="2012" name="J. Bacteriol.">
        <title>Complete resequencing and reannotation of the Lactobacillus plantarum WCFS1 genome.</title>
        <authorList>
            <person name="Siezen R.J."/>
            <person name="Francke C."/>
            <person name="Renckens B."/>
            <person name="Boekhorst J."/>
            <person name="Wels M."/>
            <person name="Kleerebezem M."/>
            <person name="van Hijum S.A."/>
        </authorList>
    </citation>
    <scope>NUCLEOTIDE SEQUENCE [LARGE SCALE GENOMIC DNA]</scope>
    <scope>GENOME REANNOTATION</scope>
    <source>
        <strain>ATCC BAA-793 / NCIMB 8826 / WCFS1</strain>
    </source>
</reference>
<keyword id="KW-0028">Amino-acid biosynthesis</keyword>
<keyword id="KW-0963">Cytoplasm</keyword>
<keyword id="KW-0413">Isomerase</keyword>
<keyword id="KW-0457">Lysine biosynthesis</keyword>
<keyword id="KW-1185">Reference proteome</keyword>
<dbReference type="EC" id="5.1.1.7" evidence="1"/>
<dbReference type="EMBL" id="AL935263">
    <property type="protein sequence ID" value="CCC79406.1"/>
    <property type="molecule type" value="Genomic_DNA"/>
</dbReference>
<dbReference type="RefSeq" id="WP_003644607.1">
    <property type="nucleotide sequence ID" value="NC_004567.2"/>
</dbReference>
<dbReference type="RefSeq" id="YP_004889920.1">
    <property type="nucleotide sequence ID" value="NC_004567.2"/>
</dbReference>
<dbReference type="SMR" id="Q88V90"/>
<dbReference type="STRING" id="220668.lp_2185"/>
<dbReference type="EnsemblBacteria" id="CCC79406">
    <property type="protein sequence ID" value="CCC79406"/>
    <property type="gene ID" value="lp_2185"/>
</dbReference>
<dbReference type="KEGG" id="lpl:lp_2185"/>
<dbReference type="PATRIC" id="fig|220668.9.peg.1847"/>
<dbReference type="eggNOG" id="COG0253">
    <property type="taxonomic scope" value="Bacteria"/>
</dbReference>
<dbReference type="HOGENOM" id="CLU_053306_3_1_9"/>
<dbReference type="OrthoDB" id="9805408at2"/>
<dbReference type="PhylomeDB" id="Q88V90"/>
<dbReference type="UniPathway" id="UPA00034">
    <property type="reaction ID" value="UER00025"/>
</dbReference>
<dbReference type="Proteomes" id="UP000000432">
    <property type="component" value="Chromosome"/>
</dbReference>
<dbReference type="GO" id="GO:0005829">
    <property type="term" value="C:cytosol"/>
    <property type="evidence" value="ECO:0007669"/>
    <property type="project" value="TreeGrafter"/>
</dbReference>
<dbReference type="GO" id="GO:0008837">
    <property type="term" value="F:diaminopimelate epimerase activity"/>
    <property type="evidence" value="ECO:0007669"/>
    <property type="project" value="UniProtKB-UniRule"/>
</dbReference>
<dbReference type="GO" id="GO:0009089">
    <property type="term" value="P:lysine biosynthetic process via diaminopimelate"/>
    <property type="evidence" value="ECO:0007669"/>
    <property type="project" value="UniProtKB-UniRule"/>
</dbReference>
<dbReference type="Gene3D" id="3.10.310.10">
    <property type="entry name" value="Diaminopimelate Epimerase, Chain A, domain 1"/>
    <property type="match status" value="2"/>
</dbReference>
<dbReference type="HAMAP" id="MF_00197">
    <property type="entry name" value="DAP_epimerase"/>
    <property type="match status" value="1"/>
</dbReference>
<dbReference type="InterPro" id="IPR018510">
    <property type="entry name" value="DAP_epimerase_AS"/>
</dbReference>
<dbReference type="InterPro" id="IPR001653">
    <property type="entry name" value="DAP_epimerase_DapF"/>
</dbReference>
<dbReference type="NCBIfam" id="TIGR00652">
    <property type="entry name" value="DapF"/>
    <property type="match status" value="1"/>
</dbReference>
<dbReference type="PANTHER" id="PTHR31689:SF0">
    <property type="entry name" value="DIAMINOPIMELATE EPIMERASE"/>
    <property type="match status" value="1"/>
</dbReference>
<dbReference type="PANTHER" id="PTHR31689">
    <property type="entry name" value="DIAMINOPIMELATE EPIMERASE, CHLOROPLASTIC"/>
    <property type="match status" value="1"/>
</dbReference>
<dbReference type="Pfam" id="PF01678">
    <property type="entry name" value="DAP_epimerase"/>
    <property type="match status" value="2"/>
</dbReference>
<dbReference type="SUPFAM" id="SSF54506">
    <property type="entry name" value="Diaminopimelate epimerase-like"/>
    <property type="match status" value="2"/>
</dbReference>
<dbReference type="PROSITE" id="PS01326">
    <property type="entry name" value="DAP_EPIMERASE"/>
    <property type="match status" value="1"/>
</dbReference>
<proteinExistence type="inferred from homology"/>
<sequence>MAVKMIKVHGSGNDFYLLDQTQFQAPLSDADLKQLAINICKRDGAGLYDGADGVLVVDKSEHPQVLGRMRVINADGTEASMCGNGLRTVARYLGTQNSQEDFRVQTMYADLKVQAVADFAAHVPAYSVEISPVTFDAQTLGMHANNDATTIINEKIPALSADLKFSAVAVPNPHLIAFVDHDTLVGPELGRIGEWMNDGKNQIFPDGVNVSFVEVLGPNSIFVRTFERGVGFTNACGTAMSASSLMYVLLHQESTDFNQEIHVTNPGGMVKTVVHQGADEEYWMELIGNATFVRIVTLPLEDALQGDYSPVTATETGEQVAYEDFVANLAKA</sequence>
<gene>
    <name evidence="1" type="primary">dapF</name>
    <name type="ordered locus">lp_2185</name>
</gene>
<name>DAPF_LACPL</name>
<organism>
    <name type="scientific">Lactiplantibacillus plantarum (strain ATCC BAA-793 / NCIMB 8826 / WCFS1)</name>
    <name type="common">Lactobacillus plantarum</name>
    <dbReference type="NCBI Taxonomy" id="220668"/>
    <lineage>
        <taxon>Bacteria</taxon>
        <taxon>Bacillati</taxon>
        <taxon>Bacillota</taxon>
        <taxon>Bacilli</taxon>
        <taxon>Lactobacillales</taxon>
        <taxon>Lactobacillaceae</taxon>
        <taxon>Lactiplantibacillus</taxon>
    </lineage>
</organism>
<accession>Q88V90</accession>
<accession>F9UQB7</accession>
<comment type="function">
    <text evidence="1">Catalyzes the stereoinversion of LL-2,6-diaminopimelate (L,L-DAP) to meso-diaminopimelate (meso-DAP), a precursor of L-lysine and an essential component of the bacterial peptidoglycan.</text>
</comment>
<comment type="catalytic activity">
    <reaction evidence="1">
        <text>(2S,6S)-2,6-diaminopimelate = meso-2,6-diaminopimelate</text>
        <dbReference type="Rhea" id="RHEA:15393"/>
        <dbReference type="ChEBI" id="CHEBI:57609"/>
        <dbReference type="ChEBI" id="CHEBI:57791"/>
        <dbReference type="EC" id="5.1.1.7"/>
    </reaction>
</comment>
<comment type="pathway">
    <text evidence="1">Amino-acid biosynthesis; L-lysine biosynthesis via DAP pathway; DL-2,6-diaminopimelate from LL-2,6-diaminopimelate: step 1/1.</text>
</comment>
<comment type="subunit">
    <text evidence="1">Homodimer.</text>
</comment>
<comment type="subcellular location">
    <subcellularLocation>
        <location evidence="1">Cytoplasm</location>
    </subcellularLocation>
</comment>
<comment type="similarity">
    <text evidence="1">Belongs to the diaminopimelate epimerase family.</text>
</comment>
<evidence type="ECO:0000255" key="1">
    <source>
        <dbReference type="HAMAP-Rule" id="MF_00197"/>
    </source>
</evidence>
<feature type="chain" id="PRO_0000149845" description="Diaminopimelate epimerase">
    <location>
        <begin position="1"/>
        <end position="332"/>
    </location>
</feature>
<feature type="active site" description="Proton donor" evidence="1">
    <location>
        <position position="82"/>
    </location>
</feature>
<feature type="active site" description="Proton acceptor" evidence="1">
    <location>
        <position position="236"/>
    </location>
</feature>
<feature type="binding site" evidence="1">
    <location>
        <position position="13"/>
    </location>
    <ligand>
        <name>substrate</name>
    </ligand>
</feature>
<feature type="binding site" evidence="1">
    <location>
        <position position="73"/>
    </location>
    <ligand>
        <name>substrate</name>
    </ligand>
</feature>
<feature type="binding site" evidence="1">
    <location>
        <begin position="83"/>
        <end position="84"/>
    </location>
    <ligand>
        <name>substrate</name>
    </ligand>
</feature>
<feature type="binding site" evidence="1">
    <location>
        <position position="172"/>
    </location>
    <ligand>
        <name>substrate</name>
    </ligand>
</feature>
<feature type="binding site" evidence="1">
    <location>
        <position position="209"/>
    </location>
    <ligand>
        <name>substrate</name>
    </ligand>
</feature>
<feature type="binding site" evidence="1">
    <location>
        <begin position="227"/>
        <end position="228"/>
    </location>
    <ligand>
        <name>substrate</name>
    </ligand>
</feature>
<feature type="binding site" evidence="1">
    <location>
        <begin position="237"/>
        <end position="238"/>
    </location>
    <ligand>
        <name>substrate</name>
    </ligand>
</feature>
<feature type="site" description="Could be important to modulate the pK values of the two catalytic cysteine residues" evidence="1">
    <location>
        <position position="174"/>
    </location>
</feature>
<feature type="site" description="Could be important to modulate the pK values of the two catalytic cysteine residues" evidence="1">
    <location>
        <position position="227"/>
    </location>
</feature>
<protein>
    <recommendedName>
        <fullName evidence="1">Diaminopimelate epimerase</fullName>
        <shortName evidence="1">DAP epimerase</shortName>
        <ecNumber evidence="1">5.1.1.7</ecNumber>
    </recommendedName>
    <alternativeName>
        <fullName evidence="1">PLP-independent amino acid racemase</fullName>
    </alternativeName>
</protein>